<proteinExistence type="inferred from homology"/>
<comment type="function">
    <text evidence="1">Endonuclease that specifically degrades the RNA of RNA-DNA hybrids.</text>
</comment>
<comment type="catalytic activity">
    <reaction evidence="1">
        <text>Endonucleolytic cleavage to 5'-phosphomonoester.</text>
        <dbReference type="EC" id="3.1.26.4"/>
    </reaction>
</comment>
<comment type="cofactor">
    <cofactor evidence="1">
        <name>Mn(2+)</name>
        <dbReference type="ChEBI" id="CHEBI:29035"/>
    </cofactor>
    <cofactor evidence="1">
        <name>Mg(2+)</name>
        <dbReference type="ChEBI" id="CHEBI:18420"/>
    </cofactor>
    <text evidence="1">Manganese or magnesium. Binds 1 divalent metal ion per monomer in the absence of substrate. May bind a second metal ion after substrate binding.</text>
</comment>
<comment type="subcellular location">
    <subcellularLocation>
        <location evidence="1">Cytoplasm</location>
    </subcellularLocation>
</comment>
<comment type="similarity">
    <text evidence="1">Belongs to the RNase HII family.</text>
</comment>
<gene>
    <name evidence="1" type="primary">rnhB</name>
    <name type="ordered locus">PA14_17230</name>
</gene>
<keyword id="KW-0963">Cytoplasm</keyword>
<keyword id="KW-0255">Endonuclease</keyword>
<keyword id="KW-0378">Hydrolase</keyword>
<keyword id="KW-0464">Manganese</keyword>
<keyword id="KW-0479">Metal-binding</keyword>
<keyword id="KW-0540">Nuclease</keyword>
<organism>
    <name type="scientific">Pseudomonas aeruginosa (strain UCBPP-PA14)</name>
    <dbReference type="NCBI Taxonomy" id="208963"/>
    <lineage>
        <taxon>Bacteria</taxon>
        <taxon>Pseudomonadati</taxon>
        <taxon>Pseudomonadota</taxon>
        <taxon>Gammaproteobacteria</taxon>
        <taxon>Pseudomonadales</taxon>
        <taxon>Pseudomonadaceae</taxon>
        <taxon>Pseudomonas</taxon>
    </lineage>
</organism>
<accession>Q02RB4</accession>
<reference key="1">
    <citation type="journal article" date="2006" name="Genome Biol.">
        <title>Genomic analysis reveals that Pseudomonas aeruginosa virulence is combinatorial.</title>
        <authorList>
            <person name="Lee D.G."/>
            <person name="Urbach J.M."/>
            <person name="Wu G."/>
            <person name="Liberati N.T."/>
            <person name="Feinbaum R.L."/>
            <person name="Miyata S."/>
            <person name="Diggins L.T."/>
            <person name="He J."/>
            <person name="Saucier M."/>
            <person name="Deziel E."/>
            <person name="Friedman L."/>
            <person name="Li L."/>
            <person name="Grills G."/>
            <person name="Montgomery K."/>
            <person name="Kucherlapati R."/>
            <person name="Rahme L.G."/>
            <person name="Ausubel F.M."/>
        </authorList>
    </citation>
    <scope>NUCLEOTIDE SEQUENCE [LARGE SCALE GENOMIC DNA]</scope>
    <source>
        <strain>UCBPP-PA14</strain>
    </source>
</reference>
<protein>
    <recommendedName>
        <fullName evidence="1">Ribonuclease HII</fullName>
        <shortName evidence="1">RNase HII</shortName>
        <ecNumber evidence="1">3.1.26.4</ecNumber>
    </recommendedName>
</protein>
<feature type="chain" id="PRO_1000031180" description="Ribonuclease HII">
    <location>
        <begin position="1"/>
        <end position="201"/>
    </location>
</feature>
<feature type="domain" description="RNase H type-2" evidence="2">
    <location>
        <begin position="12"/>
        <end position="201"/>
    </location>
</feature>
<feature type="binding site" evidence="1">
    <location>
        <position position="18"/>
    </location>
    <ligand>
        <name>a divalent metal cation</name>
        <dbReference type="ChEBI" id="CHEBI:60240"/>
    </ligand>
</feature>
<feature type="binding site" evidence="1">
    <location>
        <position position="19"/>
    </location>
    <ligand>
        <name>a divalent metal cation</name>
        <dbReference type="ChEBI" id="CHEBI:60240"/>
    </ligand>
</feature>
<feature type="binding site" evidence="1">
    <location>
        <position position="110"/>
    </location>
    <ligand>
        <name>a divalent metal cation</name>
        <dbReference type="ChEBI" id="CHEBI:60240"/>
    </ligand>
</feature>
<evidence type="ECO:0000255" key="1">
    <source>
        <dbReference type="HAMAP-Rule" id="MF_00052"/>
    </source>
</evidence>
<evidence type="ECO:0000255" key="2">
    <source>
        <dbReference type="PROSITE-ProRule" id="PRU01319"/>
    </source>
</evidence>
<dbReference type="EC" id="3.1.26.4" evidence="1"/>
<dbReference type="EMBL" id="CP000438">
    <property type="protein sequence ID" value="ABJ12875.1"/>
    <property type="molecule type" value="Genomic_DNA"/>
</dbReference>
<dbReference type="RefSeq" id="WP_003092371.1">
    <property type="nucleotide sequence ID" value="NZ_CP034244.1"/>
</dbReference>
<dbReference type="SMR" id="Q02RB4"/>
<dbReference type="KEGG" id="pau:PA14_17230"/>
<dbReference type="PseudoCAP" id="PA14_17230"/>
<dbReference type="HOGENOM" id="CLU_036532_3_2_6"/>
<dbReference type="BioCyc" id="PAER208963:G1G74-1419-MONOMER"/>
<dbReference type="Proteomes" id="UP000000653">
    <property type="component" value="Chromosome"/>
</dbReference>
<dbReference type="GO" id="GO:0005737">
    <property type="term" value="C:cytoplasm"/>
    <property type="evidence" value="ECO:0007669"/>
    <property type="project" value="UniProtKB-SubCell"/>
</dbReference>
<dbReference type="GO" id="GO:0032299">
    <property type="term" value="C:ribonuclease H2 complex"/>
    <property type="evidence" value="ECO:0007669"/>
    <property type="project" value="TreeGrafter"/>
</dbReference>
<dbReference type="GO" id="GO:0030145">
    <property type="term" value="F:manganese ion binding"/>
    <property type="evidence" value="ECO:0007669"/>
    <property type="project" value="UniProtKB-UniRule"/>
</dbReference>
<dbReference type="GO" id="GO:0003723">
    <property type="term" value="F:RNA binding"/>
    <property type="evidence" value="ECO:0007669"/>
    <property type="project" value="InterPro"/>
</dbReference>
<dbReference type="GO" id="GO:0004523">
    <property type="term" value="F:RNA-DNA hybrid ribonuclease activity"/>
    <property type="evidence" value="ECO:0007669"/>
    <property type="project" value="UniProtKB-UniRule"/>
</dbReference>
<dbReference type="GO" id="GO:0043137">
    <property type="term" value="P:DNA replication, removal of RNA primer"/>
    <property type="evidence" value="ECO:0007669"/>
    <property type="project" value="TreeGrafter"/>
</dbReference>
<dbReference type="GO" id="GO:0006298">
    <property type="term" value="P:mismatch repair"/>
    <property type="evidence" value="ECO:0007669"/>
    <property type="project" value="TreeGrafter"/>
</dbReference>
<dbReference type="CDD" id="cd07182">
    <property type="entry name" value="RNase_HII_bacteria_HII_like"/>
    <property type="match status" value="1"/>
</dbReference>
<dbReference type="FunFam" id="3.30.420.10:FF:000006">
    <property type="entry name" value="Ribonuclease HII"/>
    <property type="match status" value="1"/>
</dbReference>
<dbReference type="Gene3D" id="3.30.420.10">
    <property type="entry name" value="Ribonuclease H-like superfamily/Ribonuclease H"/>
    <property type="match status" value="1"/>
</dbReference>
<dbReference type="HAMAP" id="MF_00052_B">
    <property type="entry name" value="RNase_HII_B"/>
    <property type="match status" value="1"/>
</dbReference>
<dbReference type="InterPro" id="IPR022898">
    <property type="entry name" value="RNase_HII"/>
</dbReference>
<dbReference type="InterPro" id="IPR001352">
    <property type="entry name" value="RNase_HII/HIII"/>
</dbReference>
<dbReference type="InterPro" id="IPR024567">
    <property type="entry name" value="RNase_HII/HIII_dom"/>
</dbReference>
<dbReference type="InterPro" id="IPR012337">
    <property type="entry name" value="RNaseH-like_sf"/>
</dbReference>
<dbReference type="InterPro" id="IPR036397">
    <property type="entry name" value="RNaseH_sf"/>
</dbReference>
<dbReference type="NCBIfam" id="NF000594">
    <property type="entry name" value="PRK00015.1-1"/>
    <property type="match status" value="1"/>
</dbReference>
<dbReference type="NCBIfam" id="NF000595">
    <property type="entry name" value="PRK00015.1-3"/>
    <property type="match status" value="1"/>
</dbReference>
<dbReference type="NCBIfam" id="NF000596">
    <property type="entry name" value="PRK00015.1-4"/>
    <property type="match status" value="1"/>
</dbReference>
<dbReference type="PANTHER" id="PTHR10954">
    <property type="entry name" value="RIBONUCLEASE H2 SUBUNIT A"/>
    <property type="match status" value="1"/>
</dbReference>
<dbReference type="PANTHER" id="PTHR10954:SF18">
    <property type="entry name" value="RIBONUCLEASE HII"/>
    <property type="match status" value="1"/>
</dbReference>
<dbReference type="Pfam" id="PF01351">
    <property type="entry name" value="RNase_HII"/>
    <property type="match status" value="1"/>
</dbReference>
<dbReference type="SUPFAM" id="SSF53098">
    <property type="entry name" value="Ribonuclease H-like"/>
    <property type="match status" value="1"/>
</dbReference>
<dbReference type="PROSITE" id="PS51975">
    <property type="entry name" value="RNASE_H_2"/>
    <property type="match status" value="1"/>
</dbReference>
<sequence>MQLGLDFNLVEDLVAGVDEVGRGPLCGPVVTAAVILDPSRPILGLNDSKKLSEARREALFEEIREKALAWCIARAEVEEIDRLNILHATMLAMQRAVEGLSVTPRLALIDGNRCPKLAVPSAPVVKGDSQVPAIAAASILAKVSRDREMVELDRVYPGYGMAGHKGYPTAVHLEALSRLGPTPIHRRSFAPVRELLDVPVQ</sequence>
<name>RNH2_PSEAB</name>